<name>UVRB_YERPE</name>
<feature type="chain" id="PRO_0000138451" description="UvrABC system protein B">
    <location>
        <begin position="1"/>
        <end position="671"/>
    </location>
</feature>
<feature type="domain" description="Helicase ATP-binding" evidence="1">
    <location>
        <begin position="26"/>
        <end position="414"/>
    </location>
</feature>
<feature type="domain" description="Helicase C-terminal" evidence="1">
    <location>
        <begin position="431"/>
        <end position="593"/>
    </location>
</feature>
<feature type="domain" description="UVR" evidence="1">
    <location>
        <begin position="631"/>
        <end position="666"/>
    </location>
</feature>
<feature type="short sequence motif" description="Beta-hairpin">
    <location>
        <begin position="92"/>
        <end position="115"/>
    </location>
</feature>
<feature type="binding site" evidence="1">
    <location>
        <begin position="39"/>
        <end position="46"/>
    </location>
    <ligand>
        <name>ATP</name>
        <dbReference type="ChEBI" id="CHEBI:30616"/>
    </ligand>
</feature>
<evidence type="ECO:0000255" key="1">
    <source>
        <dbReference type="HAMAP-Rule" id="MF_00204"/>
    </source>
</evidence>
<gene>
    <name evidence="1" type="primary">uvrB</name>
    <name type="ordered locus">YPO1156</name>
    <name type="ordered locus">y3026</name>
    <name type="ordered locus">YP_1003</name>
</gene>
<comment type="function">
    <text evidence="1">The UvrABC repair system catalyzes the recognition and processing of DNA lesions. A damage recognition complex composed of 2 UvrA and 2 UvrB subunits scans DNA for abnormalities. Upon binding of the UvrA(2)B(2) complex to a putative damaged site, the DNA wraps around one UvrB monomer. DNA wrap is dependent on ATP binding by UvrB and probably causes local melting of the DNA helix, facilitating insertion of UvrB beta-hairpin between the DNA strands. Then UvrB probes one DNA strand for the presence of a lesion. If a lesion is found the UvrA subunits dissociate and the UvrB-DNA preincision complex is formed. This complex is subsequently bound by UvrC and the second UvrB is released. If no lesion is found, the DNA wraps around the other UvrB subunit that will check the other stand for damage.</text>
</comment>
<comment type="subunit">
    <text evidence="1">Forms a heterotetramer with UvrA during the search for lesions. Interacts with UvrC in an incision complex.</text>
</comment>
<comment type="subcellular location">
    <subcellularLocation>
        <location evidence="1">Cytoplasm</location>
    </subcellularLocation>
</comment>
<comment type="domain">
    <text evidence="1">The beta-hairpin motif is involved in DNA binding.</text>
</comment>
<comment type="similarity">
    <text evidence="1">Belongs to the UvrB family.</text>
</comment>
<protein>
    <recommendedName>
        <fullName evidence="1">UvrABC system protein B</fullName>
        <shortName evidence="1">Protein UvrB</shortName>
    </recommendedName>
    <alternativeName>
        <fullName evidence="1">Excinuclease ABC subunit B</fullName>
    </alternativeName>
</protein>
<reference key="1">
    <citation type="journal article" date="2001" name="Nature">
        <title>Genome sequence of Yersinia pestis, the causative agent of plague.</title>
        <authorList>
            <person name="Parkhill J."/>
            <person name="Wren B.W."/>
            <person name="Thomson N.R."/>
            <person name="Titball R.W."/>
            <person name="Holden M.T.G."/>
            <person name="Prentice M.B."/>
            <person name="Sebaihia M."/>
            <person name="James K.D."/>
            <person name="Churcher C.M."/>
            <person name="Mungall K.L."/>
            <person name="Baker S."/>
            <person name="Basham D."/>
            <person name="Bentley S.D."/>
            <person name="Brooks K."/>
            <person name="Cerdeno-Tarraga A.-M."/>
            <person name="Chillingworth T."/>
            <person name="Cronin A."/>
            <person name="Davies R.M."/>
            <person name="Davis P."/>
            <person name="Dougan G."/>
            <person name="Feltwell T."/>
            <person name="Hamlin N."/>
            <person name="Holroyd S."/>
            <person name="Jagels K."/>
            <person name="Karlyshev A.V."/>
            <person name="Leather S."/>
            <person name="Moule S."/>
            <person name="Oyston P.C.F."/>
            <person name="Quail M.A."/>
            <person name="Rutherford K.M."/>
            <person name="Simmonds M."/>
            <person name="Skelton J."/>
            <person name="Stevens K."/>
            <person name="Whitehead S."/>
            <person name="Barrell B.G."/>
        </authorList>
    </citation>
    <scope>NUCLEOTIDE SEQUENCE [LARGE SCALE GENOMIC DNA]</scope>
    <source>
        <strain>CO-92 / Biovar Orientalis</strain>
    </source>
</reference>
<reference key="2">
    <citation type="journal article" date="2002" name="J. Bacteriol.">
        <title>Genome sequence of Yersinia pestis KIM.</title>
        <authorList>
            <person name="Deng W."/>
            <person name="Burland V."/>
            <person name="Plunkett G. III"/>
            <person name="Boutin A."/>
            <person name="Mayhew G.F."/>
            <person name="Liss P."/>
            <person name="Perna N.T."/>
            <person name="Rose D.J."/>
            <person name="Mau B."/>
            <person name="Zhou S."/>
            <person name="Schwartz D.C."/>
            <person name="Fetherston J.D."/>
            <person name="Lindler L.E."/>
            <person name="Brubaker R.R."/>
            <person name="Plano G.V."/>
            <person name="Straley S.C."/>
            <person name="McDonough K.A."/>
            <person name="Nilles M.L."/>
            <person name="Matson J.S."/>
            <person name="Blattner F.R."/>
            <person name="Perry R.D."/>
        </authorList>
    </citation>
    <scope>NUCLEOTIDE SEQUENCE [LARGE SCALE GENOMIC DNA]</scope>
    <source>
        <strain>KIM10+ / Biovar Mediaevalis</strain>
    </source>
</reference>
<reference key="3">
    <citation type="journal article" date="2004" name="DNA Res.">
        <title>Complete genome sequence of Yersinia pestis strain 91001, an isolate avirulent to humans.</title>
        <authorList>
            <person name="Song Y."/>
            <person name="Tong Z."/>
            <person name="Wang J."/>
            <person name="Wang L."/>
            <person name="Guo Z."/>
            <person name="Han Y."/>
            <person name="Zhang J."/>
            <person name="Pei D."/>
            <person name="Zhou D."/>
            <person name="Qin H."/>
            <person name="Pang X."/>
            <person name="Han Y."/>
            <person name="Zhai J."/>
            <person name="Li M."/>
            <person name="Cui B."/>
            <person name="Qi Z."/>
            <person name="Jin L."/>
            <person name="Dai R."/>
            <person name="Chen F."/>
            <person name="Li S."/>
            <person name="Ye C."/>
            <person name="Du Z."/>
            <person name="Lin W."/>
            <person name="Wang J."/>
            <person name="Yu J."/>
            <person name="Yang H."/>
            <person name="Wang J."/>
            <person name="Huang P."/>
            <person name="Yang R."/>
        </authorList>
    </citation>
    <scope>NUCLEOTIDE SEQUENCE [LARGE SCALE GENOMIC DNA]</scope>
    <source>
        <strain>91001 / Biovar Mediaevalis</strain>
    </source>
</reference>
<dbReference type="EMBL" id="AL590842">
    <property type="protein sequence ID" value="CAL19820.1"/>
    <property type="molecule type" value="Genomic_DNA"/>
</dbReference>
<dbReference type="EMBL" id="AE009952">
    <property type="protein sequence ID" value="AAM86577.1"/>
    <property type="molecule type" value="Genomic_DNA"/>
</dbReference>
<dbReference type="EMBL" id="AE017042">
    <property type="protein sequence ID" value="AAS61254.1"/>
    <property type="molecule type" value="Genomic_DNA"/>
</dbReference>
<dbReference type="PIR" id="AB0142">
    <property type="entry name" value="AB0142"/>
</dbReference>
<dbReference type="RefSeq" id="WP_002210767.1">
    <property type="nucleotide sequence ID" value="NZ_WUCM01000016.1"/>
</dbReference>
<dbReference type="RefSeq" id="YP_002346195.1">
    <property type="nucleotide sequence ID" value="NC_003143.1"/>
</dbReference>
<dbReference type="SMR" id="Q8ZGW7"/>
<dbReference type="IntAct" id="Q8ZGW7">
    <property type="interactions" value="2"/>
</dbReference>
<dbReference type="STRING" id="214092.YPO1156"/>
<dbReference type="PaxDb" id="214092-YPO1156"/>
<dbReference type="DNASU" id="1147973"/>
<dbReference type="EnsemblBacteria" id="AAS61254">
    <property type="protein sequence ID" value="AAS61254"/>
    <property type="gene ID" value="YP_1003"/>
</dbReference>
<dbReference type="GeneID" id="57977295"/>
<dbReference type="KEGG" id="ype:YPO1156"/>
<dbReference type="KEGG" id="ypk:y3026"/>
<dbReference type="KEGG" id="ypm:YP_1003"/>
<dbReference type="PATRIC" id="fig|214092.21.peg.1452"/>
<dbReference type="eggNOG" id="COG0556">
    <property type="taxonomic scope" value="Bacteria"/>
</dbReference>
<dbReference type="HOGENOM" id="CLU_009621_2_1_6"/>
<dbReference type="OMA" id="RYMHSEI"/>
<dbReference type="OrthoDB" id="9806651at2"/>
<dbReference type="Proteomes" id="UP000000815">
    <property type="component" value="Chromosome"/>
</dbReference>
<dbReference type="Proteomes" id="UP000001019">
    <property type="component" value="Chromosome"/>
</dbReference>
<dbReference type="Proteomes" id="UP000002490">
    <property type="component" value="Chromosome"/>
</dbReference>
<dbReference type="GO" id="GO:0005737">
    <property type="term" value="C:cytoplasm"/>
    <property type="evidence" value="ECO:0007669"/>
    <property type="project" value="UniProtKB-SubCell"/>
</dbReference>
<dbReference type="GO" id="GO:0009380">
    <property type="term" value="C:excinuclease repair complex"/>
    <property type="evidence" value="ECO:0000318"/>
    <property type="project" value="GO_Central"/>
</dbReference>
<dbReference type="GO" id="GO:0005524">
    <property type="term" value="F:ATP binding"/>
    <property type="evidence" value="ECO:0007669"/>
    <property type="project" value="UniProtKB-UniRule"/>
</dbReference>
<dbReference type="GO" id="GO:0016887">
    <property type="term" value="F:ATP hydrolysis activity"/>
    <property type="evidence" value="ECO:0007669"/>
    <property type="project" value="InterPro"/>
</dbReference>
<dbReference type="GO" id="GO:0003677">
    <property type="term" value="F:DNA binding"/>
    <property type="evidence" value="ECO:0007669"/>
    <property type="project" value="UniProtKB-UniRule"/>
</dbReference>
<dbReference type="GO" id="GO:0009381">
    <property type="term" value="F:excinuclease ABC activity"/>
    <property type="evidence" value="ECO:0007669"/>
    <property type="project" value="UniProtKB-UniRule"/>
</dbReference>
<dbReference type="GO" id="GO:0000715">
    <property type="term" value="P:nucleotide-excision repair, DNA damage recognition"/>
    <property type="evidence" value="ECO:0000318"/>
    <property type="project" value="GO_Central"/>
</dbReference>
<dbReference type="GO" id="GO:0009432">
    <property type="term" value="P:SOS response"/>
    <property type="evidence" value="ECO:0007669"/>
    <property type="project" value="UniProtKB-UniRule"/>
</dbReference>
<dbReference type="CDD" id="cd17916">
    <property type="entry name" value="DEXHc_UvrB"/>
    <property type="match status" value="1"/>
</dbReference>
<dbReference type="CDD" id="cd18790">
    <property type="entry name" value="SF2_C_UvrB"/>
    <property type="match status" value="1"/>
</dbReference>
<dbReference type="FunFam" id="3.40.50.300:FF:000257">
    <property type="entry name" value="UvrABC system protein B"/>
    <property type="match status" value="1"/>
</dbReference>
<dbReference type="FunFam" id="3.40.50.300:FF:000401">
    <property type="entry name" value="UvrABC system protein B"/>
    <property type="match status" value="1"/>
</dbReference>
<dbReference type="FunFam" id="3.40.50.300:FF:000477">
    <property type="entry name" value="UvrABC system protein B"/>
    <property type="match status" value="1"/>
</dbReference>
<dbReference type="Gene3D" id="3.40.50.300">
    <property type="entry name" value="P-loop containing nucleotide triphosphate hydrolases"/>
    <property type="match status" value="3"/>
</dbReference>
<dbReference type="Gene3D" id="4.10.860.10">
    <property type="entry name" value="UVR domain"/>
    <property type="match status" value="1"/>
</dbReference>
<dbReference type="HAMAP" id="MF_00204">
    <property type="entry name" value="UvrB"/>
    <property type="match status" value="1"/>
</dbReference>
<dbReference type="InterPro" id="IPR006935">
    <property type="entry name" value="Helicase/UvrB_N"/>
</dbReference>
<dbReference type="InterPro" id="IPR014001">
    <property type="entry name" value="Helicase_ATP-bd"/>
</dbReference>
<dbReference type="InterPro" id="IPR001650">
    <property type="entry name" value="Helicase_C-like"/>
</dbReference>
<dbReference type="InterPro" id="IPR027417">
    <property type="entry name" value="P-loop_NTPase"/>
</dbReference>
<dbReference type="InterPro" id="IPR001943">
    <property type="entry name" value="UVR_dom"/>
</dbReference>
<dbReference type="InterPro" id="IPR036876">
    <property type="entry name" value="UVR_dom_sf"/>
</dbReference>
<dbReference type="InterPro" id="IPR004807">
    <property type="entry name" value="UvrB"/>
</dbReference>
<dbReference type="InterPro" id="IPR041471">
    <property type="entry name" value="UvrB_inter"/>
</dbReference>
<dbReference type="InterPro" id="IPR024759">
    <property type="entry name" value="UvrB_YAD/RRR_dom"/>
</dbReference>
<dbReference type="NCBIfam" id="NF003673">
    <property type="entry name" value="PRK05298.1"/>
    <property type="match status" value="1"/>
</dbReference>
<dbReference type="NCBIfam" id="TIGR00631">
    <property type="entry name" value="uvrb"/>
    <property type="match status" value="1"/>
</dbReference>
<dbReference type="PANTHER" id="PTHR24029">
    <property type="entry name" value="UVRABC SYSTEM PROTEIN B"/>
    <property type="match status" value="1"/>
</dbReference>
<dbReference type="PANTHER" id="PTHR24029:SF0">
    <property type="entry name" value="UVRABC SYSTEM PROTEIN B"/>
    <property type="match status" value="1"/>
</dbReference>
<dbReference type="Pfam" id="PF00271">
    <property type="entry name" value="Helicase_C"/>
    <property type="match status" value="1"/>
</dbReference>
<dbReference type="Pfam" id="PF04851">
    <property type="entry name" value="ResIII"/>
    <property type="match status" value="1"/>
</dbReference>
<dbReference type="Pfam" id="PF02151">
    <property type="entry name" value="UVR"/>
    <property type="match status" value="1"/>
</dbReference>
<dbReference type="Pfam" id="PF12344">
    <property type="entry name" value="UvrB"/>
    <property type="match status" value="1"/>
</dbReference>
<dbReference type="Pfam" id="PF17757">
    <property type="entry name" value="UvrB_inter"/>
    <property type="match status" value="1"/>
</dbReference>
<dbReference type="SMART" id="SM00487">
    <property type="entry name" value="DEXDc"/>
    <property type="match status" value="1"/>
</dbReference>
<dbReference type="SMART" id="SM00490">
    <property type="entry name" value="HELICc"/>
    <property type="match status" value="1"/>
</dbReference>
<dbReference type="SUPFAM" id="SSF46600">
    <property type="entry name" value="C-terminal UvrC-binding domain of UvrB"/>
    <property type="match status" value="1"/>
</dbReference>
<dbReference type="SUPFAM" id="SSF52540">
    <property type="entry name" value="P-loop containing nucleoside triphosphate hydrolases"/>
    <property type="match status" value="2"/>
</dbReference>
<dbReference type="PROSITE" id="PS51192">
    <property type="entry name" value="HELICASE_ATP_BIND_1"/>
    <property type="match status" value="1"/>
</dbReference>
<dbReference type="PROSITE" id="PS51194">
    <property type="entry name" value="HELICASE_CTER"/>
    <property type="match status" value="1"/>
</dbReference>
<dbReference type="PROSITE" id="PS50151">
    <property type="entry name" value="UVR"/>
    <property type="match status" value="1"/>
</dbReference>
<sequence>MSKSFKLHSVFKPAGDQPEAIRKLEEGLENGLAHQTLLGVTGSGKTFTVANVIADLNRPTMILAPNKTLAAQLYGEMKEFFPDNAVEYFVSYYDYYQPEAYVPSSDTFIEKDASVNEHIEQMRLSATKALLERRDVVVVASVSAIYGLGDPDLYLKMMLHLTRGMIIDQRSILRRLSELQYSRNDQVFQRGTFRVRGEVIDIFPAESDEWALRVELFDEEVERLSIFDPLTGQLQHEVPRFTVYPKTHYVTPRERILQAMEEIKVELAERRQVLLANNKLLEEQRLSQRTQFDLEMMNELGYCSGIENYSRYLSGRGPGEAPPTLFDYLPADGLLIVDESHVTIPQIGGMYKGDRSRKETLVEYGFRLPSALDNRPMRFEEFEALAPQTIYVSATPGKYELEKSGGDIIEQVVRPTGLLDPLIEVRPVATQVDDLLSEIRIRAAINERVLVTTLTKRMAEDLTDYLSEHGAKVRYLHSDIDTVERVEIIRDLRLGEFDVLVGINLLREGLDMPEVSLVAILDADKEGFLRSERSLIQTIGRAARNLNGKAILYGDRITASMEKAIGETERRRAKQQAYNEERRIIPQGLNKKIGDILQLGQPSMRGKGKGRGSHKMADTTQYQSLSPKALDQKIRELEAKMYTYAQNLEFEQAAELRDQVHQLRQQFIAIS</sequence>
<proteinExistence type="inferred from homology"/>
<accession>Q8ZGW7</accession>
<accession>Q0WHP3</accession>
<organism>
    <name type="scientific">Yersinia pestis</name>
    <dbReference type="NCBI Taxonomy" id="632"/>
    <lineage>
        <taxon>Bacteria</taxon>
        <taxon>Pseudomonadati</taxon>
        <taxon>Pseudomonadota</taxon>
        <taxon>Gammaproteobacteria</taxon>
        <taxon>Enterobacterales</taxon>
        <taxon>Yersiniaceae</taxon>
        <taxon>Yersinia</taxon>
    </lineage>
</organism>
<keyword id="KW-0067">ATP-binding</keyword>
<keyword id="KW-0963">Cytoplasm</keyword>
<keyword id="KW-0227">DNA damage</keyword>
<keyword id="KW-0228">DNA excision</keyword>
<keyword id="KW-0234">DNA repair</keyword>
<keyword id="KW-0267">Excision nuclease</keyword>
<keyword id="KW-0547">Nucleotide-binding</keyword>
<keyword id="KW-1185">Reference proteome</keyword>
<keyword id="KW-0742">SOS response</keyword>